<sequence length="246" mass="27618">MWIGVISLFPEMFRAITDYGVTGRAVKNGLLSVQCWSPRDFTYDRHRTVDDRPYGGGPGMLMMVQPLREAIHAAKAAAGEGAKVIYLSPQGRKLDQQGVCELAMNQKMILVCGRYEGVDERVIKTEIDEEWSIGDYVLSGGELPAMTLIDSVSRFIPGVLGHHASAEEDSFVDGLLDCPHYTRPEVLEGMEVPPVLLSGNHAEIRRWRLKQSLGRTWLRRPELLESLALTDEQMVLLAEFQREHKP</sequence>
<organism>
    <name type="scientific">Yersinia pestis bv. Antiqua (strain Angola)</name>
    <dbReference type="NCBI Taxonomy" id="349746"/>
    <lineage>
        <taxon>Bacteria</taxon>
        <taxon>Pseudomonadati</taxon>
        <taxon>Pseudomonadota</taxon>
        <taxon>Gammaproteobacteria</taxon>
        <taxon>Enterobacterales</taxon>
        <taxon>Yersiniaceae</taxon>
        <taxon>Yersinia</taxon>
    </lineage>
</organism>
<name>TRMD_YERPG</name>
<evidence type="ECO:0000255" key="1">
    <source>
        <dbReference type="HAMAP-Rule" id="MF_00605"/>
    </source>
</evidence>
<feature type="chain" id="PRO_1000130228" description="tRNA (guanine-N(1)-)-methyltransferase">
    <location>
        <begin position="1"/>
        <end position="246"/>
    </location>
</feature>
<feature type="binding site" evidence="1">
    <location>
        <position position="113"/>
    </location>
    <ligand>
        <name>S-adenosyl-L-methionine</name>
        <dbReference type="ChEBI" id="CHEBI:59789"/>
    </ligand>
</feature>
<feature type="binding site" evidence="1">
    <location>
        <begin position="133"/>
        <end position="138"/>
    </location>
    <ligand>
        <name>S-adenosyl-L-methionine</name>
        <dbReference type="ChEBI" id="CHEBI:59789"/>
    </ligand>
</feature>
<accession>A9R0U3</accession>
<keyword id="KW-0963">Cytoplasm</keyword>
<keyword id="KW-0489">Methyltransferase</keyword>
<keyword id="KW-0949">S-adenosyl-L-methionine</keyword>
<keyword id="KW-0808">Transferase</keyword>
<keyword id="KW-0819">tRNA processing</keyword>
<reference key="1">
    <citation type="journal article" date="2010" name="J. Bacteriol.">
        <title>Genome sequence of the deep-rooted Yersinia pestis strain Angola reveals new insights into the evolution and pangenome of the plague bacterium.</title>
        <authorList>
            <person name="Eppinger M."/>
            <person name="Worsham P.L."/>
            <person name="Nikolich M.P."/>
            <person name="Riley D.R."/>
            <person name="Sebastian Y."/>
            <person name="Mou S."/>
            <person name="Achtman M."/>
            <person name="Lindler L.E."/>
            <person name="Ravel J."/>
        </authorList>
    </citation>
    <scope>NUCLEOTIDE SEQUENCE [LARGE SCALE GENOMIC DNA]</scope>
    <source>
        <strain>Angola</strain>
    </source>
</reference>
<protein>
    <recommendedName>
        <fullName evidence="1">tRNA (guanine-N(1)-)-methyltransferase</fullName>
        <ecNumber evidence="1">2.1.1.228</ecNumber>
    </recommendedName>
    <alternativeName>
        <fullName evidence="1">M1G-methyltransferase</fullName>
    </alternativeName>
    <alternativeName>
        <fullName evidence="1">tRNA [GM37] methyltransferase</fullName>
    </alternativeName>
</protein>
<proteinExistence type="inferred from homology"/>
<gene>
    <name evidence="1" type="primary">trmD</name>
    <name type="ordered locus">YpAngola_A0880</name>
</gene>
<dbReference type="EC" id="2.1.1.228" evidence="1"/>
<dbReference type="EMBL" id="CP000901">
    <property type="protein sequence ID" value="ABX85181.1"/>
    <property type="molecule type" value="Genomic_DNA"/>
</dbReference>
<dbReference type="RefSeq" id="WP_002222284.1">
    <property type="nucleotide sequence ID" value="NZ_CP009935.1"/>
</dbReference>
<dbReference type="SMR" id="A9R0U3"/>
<dbReference type="GeneID" id="57975424"/>
<dbReference type="KEGG" id="ypg:YpAngola_A0880"/>
<dbReference type="PATRIC" id="fig|349746.12.peg.1831"/>
<dbReference type="GO" id="GO:0005829">
    <property type="term" value="C:cytosol"/>
    <property type="evidence" value="ECO:0007669"/>
    <property type="project" value="TreeGrafter"/>
</dbReference>
<dbReference type="GO" id="GO:0052906">
    <property type="term" value="F:tRNA (guanine(37)-N1)-methyltransferase activity"/>
    <property type="evidence" value="ECO:0007669"/>
    <property type="project" value="UniProtKB-UniRule"/>
</dbReference>
<dbReference type="GO" id="GO:0002939">
    <property type="term" value="P:tRNA N1-guanine methylation"/>
    <property type="evidence" value="ECO:0007669"/>
    <property type="project" value="TreeGrafter"/>
</dbReference>
<dbReference type="CDD" id="cd18080">
    <property type="entry name" value="TrmD-like"/>
    <property type="match status" value="1"/>
</dbReference>
<dbReference type="FunFam" id="1.10.1270.20:FF:000001">
    <property type="entry name" value="tRNA (guanine-N(1)-)-methyltransferase"/>
    <property type="match status" value="1"/>
</dbReference>
<dbReference type="FunFam" id="3.40.1280.10:FF:000001">
    <property type="entry name" value="tRNA (guanine-N(1)-)-methyltransferase"/>
    <property type="match status" value="1"/>
</dbReference>
<dbReference type="Gene3D" id="3.40.1280.10">
    <property type="match status" value="1"/>
</dbReference>
<dbReference type="Gene3D" id="1.10.1270.20">
    <property type="entry name" value="tRNA(m1g37)methyltransferase, domain 2"/>
    <property type="match status" value="1"/>
</dbReference>
<dbReference type="HAMAP" id="MF_00605">
    <property type="entry name" value="TrmD"/>
    <property type="match status" value="1"/>
</dbReference>
<dbReference type="InterPro" id="IPR029028">
    <property type="entry name" value="Alpha/beta_knot_MTases"/>
</dbReference>
<dbReference type="InterPro" id="IPR023148">
    <property type="entry name" value="tRNA_m1G_MeTrfase_C_sf"/>
</dbReference>
<dbReference type="InterPro" id="IPR002649">
    <property type="entry name" value="tRNA_m1G_MeTrfase_TrmD"/>
</dbReference>
<dbReference type="InterPro" id="IPR029026">
    <property type="entry name" value="tRNA_m1G_MTases_N"/>
</dbReference>
<dbReference type="InterPro" id="IPR016009">
    <property type="entry name" value="tRNA_MeTrfase_TRMD/TRM10"/>
</dbReference>
<dbReference type="NCBIfam" id="NF000648">
    <property type="entry name" value="PRK00026.1"/>
    <property type="match status" value="1"/>
</dbReference>
<dbReference type="NCBIfam" id="TIGR00088">
    <property type="entry name" value="trmD"/>
    <property type="match status" value="1"/>
</dbReference>
<dbReference type="PANTHER" id="PTHR46417">
    <property type="entry name" value="TRNA (GUANINE-N(1)-)-METHYLTRANSFERASE"/>
    <property type="match status" value="1"/>
</dbReference>
<dbReference type="PANTHER" id="PTHR46417:SF1">
    <property type="entry name" value="TRNA (GUANINE-N(1)-)-METHYLTRANSFERASE"/>
    <property type="match status" value="1"/>
</dbReference>
<dbReference type="Pfam" id="PF01746">
    <property type="entry name" value="tRNA_m1G_MT"/>
    <property type="match status" value="1"/>
</dbReference>
<dbReference type="PIRSF" id="PIRSF000386">
    <property type="entry name" value="tRNA_mtase"/>
    <property type="match status" value="1"/>
</dbReference>
<dbReference type="SUPFAM" id="SSF75217">
    <property type="entry name" value="alpha/beta knot"/>
    <property type="match status" value="1"/>
</dbReference>
<comment type="function">
    <text evidence="1">Specifically methylates guanosine-37 in various tRNAs.</text>
</comment>
<comment type="catalytic activity">
    <reaction evidence="1">
        <text>guanosine(37) in tRNA + S-adenosyl-L-methionine = N(1)-methylguanosine(37) in tRNA + S-adenosyl-L-homocysteine + H(+)</text>
        <dbReference type="Rhea" id="RHEA:36899"/>
        <dbReference type="Rhea" id="RHEA-COMP:10145"/>
        <dbReference type="Rhea" id="RHEA-COMP:10147"/>
        <dbReference type="ChEBI" id="CHEBI:15378"/>
        <dbReference type="ChEBI" id="CHEBI:57856"/>
        <dbReference type="ChEBI" id="CHEBI:59789"/>
        <dbReference type="ChEBI" id="CHEBI:73542"/>
        <dbReference type="ChEBI" id="CHEBI:74269"/>
        <dbReference type="EC" id="2.1.1.228"/>
    </reaction>
</comment>
<comment type="subunit">
    <text evidence="1">Homodimer.</text>
</comment>
<comment type="subcellular location">
    <subcellularLocation>
        <location evidence="1">Cytoplasm</location>
    </subcellularLocation>
</comment>
<comment type="similarity">
    <text evidence="1">Belongs to the RNA methyltransferase TrmD family.</text>
</comment>